<gene>
    <name type="primary">rpmG2</name>
    <name type="synonym">rpmG-2</name>
    <name type="ordered locus">EF_2731</name>
</gene>
<reference key="1">
    <citation type="journal article" date="2003" name="Science">
        <title>Role of mobile DNA in the evolution of vancomycin-resistant Enterococcus faecalis.</title>
        <authorList>
            <person name="Paulsen I.T."/>
            <person name="Banerjei L."/>
            <person name="Myers G.S.A."/>
            <person name="Nelson K.E."/>
            <person name="Seshadri R."/>
            <person name="Read T.D."/>
            <person name="Fouts D.E."/>
            <person name="Eisen J.A."/>
            <person name="Gill S.R."/>
            <person name="Heidelberg J.F."/>
            <person name="Tettelin H."/>
            <person name="Dodson R.J."/>
            <person name="Umayam L.A."/>
            <person name="Brinkac L.M."/>
            <person name="Beanan M.J."/>
            <person name="Daugherty S.C."/>
            <person name="DeBoy R.T."/>
            <person name="Durkin S.A."/>
            <person name="Kolonay J.F."/>
            <person name="Madupu R."/>
            <person name="Nelson W.C."/>
            <person name="Vamathevan J.J."/>
            <person name="Tran B."/>
            <person name="Upton J."/>
            <person name="Hansen T."/>
            <person name="Shetty J."/>
            <person name="Khouri H.M."/>
            <person name="Utterback T.R."/>
            <person name="Radune D."/>
            <person name="Ketchum K.A."/>
            <person name="Dougherty B.A."/>
            <person name="Fraser C.M."/>
        </authorList>
    </citation>
    <scope>NUCLEOTIDE SEQUENCE [LARGE SCALE GENOMIC DNA]</scope>
    <source>
        <strain>ATCC 700802 / V583</strain>
    </source>
</reference>
<keyword id="KW-1185">Reference proteome</keyword>
<keyword id="KW-0687">Ribonucleoprotein</keyword>
<keyword id="KW-0689">Ribosomal protein</keyword>
<protein>
    <recommendedName>
        <fullName evidence="1">Large ribosomal subunit protein bL33B</fullName>
    </recommendedName>
    <alternativeName>
        <fullName>50S ribosomal protein L33 2</fullName>
    </alternativeName>
</protein>
<comment type="similarity">
    <text evidence="2">Belongs to the bacterial ribosomal protein bL33 family.</text>
</comment>
<organism>
    <name type="scientific">Enterococcus faecalis (strain ATCC 700802 / V583)</name>
    <dbReference type="NCBI Taxonomy" id="226185"/>
    <lineage>
        <taxon>Bacteria</taxon>
        <taxon>Bacillati</taxon>
        <taxon>Bacillota</taxon>
        <taxon>Bacilli</taxon>
        <taxon>Lactobacillales</taxon>
        <taxon>Enterococcaceae</taxon>
        <taxon>Enterococcus</taxon>
    </lineage>
</organism>
<accession>P59627</accession>
<feature type="chain" id="PRO_0000170162" description="Large ribosomal subunit protein bL33B">
    <location>
        <begin position="1"/>
        <end position="50"/>
    </location>
</feature>
<name>RL332_ENTFA</name>
<sequence length="50" mass="5662">MATKKAALACSVCGSRNYSKSVSEGKRGERLEINKFCKYCNQYTLHKETK</sequence>
<dbReference type="EMBL" id="AE016830">
    <property type="protein sequence ID" value="AAO82432.1"/>
    <property type="molecule type" value="Genomic_DNA"/>
</dbReference>
<dbReference type="RefSeq" id="NP_816362.1">
    <property type="nucleotide sequence ID" value="NC_004668.1"/>
</dbReference>
<dbReference type="SMR" id="P59627"/>
<dbReference type="STRING" id="226185.EF_2731"/>
<dbReference type="EnsemblBacteria" id="AAO82432">
    <property type="protein sequence ID" value="AAO82432"/>
    <property type="gene ID" value="EF_2731"/>
</dbReference>
<dbReference type="KEGG" id="efa:EF2731"/>
<dbReference type="PATRIC" id="fig|226185.45.peg.837"/>
<dbReference type="eggNOG" id="COG0267">
    <property type="taxonomic scope" value="Bacteria"/>
</dbReference>
<dbReference type="HOGENOM" id="CLU_190949_0_1_9"/>
<dbReference type="Proteomes" id="UP000001415">
    <property type="component" value="Chromosome"/>
</dbReference>
<dbReference type="GO" id="GO:0005737">
    <property type="term" value="C:cytoplasm"/>
    <property type="evidence" value="ECO:0007669"/>
    <property type="project" value="UniProtKB-ARBA"/>
</dbReference>
<dbReference type="GO" id="GO:1990904">
    <property type="term" value="C:ribonucleoprotein complex"/>
    <property type="evidence" value="ECO:0007669"/>
    <property type="project" value="UniProtKB-KW"/>
</dbReference>
<dbReference type="GO" id="GO:0005840">
    <property type="term" value="C:ribosome"/>
    <property type="evidence" value="ECO:0007669"/>
    <property type="project" value="UniProtKB-KW"/>
</dbReference>
<dbReference type="GO" id="GO:0003735">
    <property type="term" value="F:structural constituent of ribosome"/>
    <property type="evidence" value="ECO:0007669"/>
    <property type="project" value="InterPro"/>
</dbReference>
<dbReference type="GO" id="GO:0006412">
    <property type="term" value="P:translation"/>
    <property type="evidence" value="ECO:0007669"/>
    <property type="project" value="UniProtKB-UniRule"/>
</dbReference>
<dbReference type="Gene3D" id="2.20.28.120">
    <property type="entry name" value="Ribosomal protein L33"/>
    <property type="match status" value="1"/>
</dbReference>
<dbReference type="HAMAP" id="MF_00294">
    <property type="entry name" value="Ribosomal_bL33"/>
    <property type="match status" value="1"/>
</dbReference>
<dbReference type="InterPro" id="IPR001705">
    <property type="entry name" value="Ribosomal_bL33"/>
</dbReference>
<dbReference type="InterPro" id="IPR038584">
    <property type="entry name" value="Ribosomal_bL33_sf"/>
</dbReference>
<dbReference type="InterPro" id="IPR011332">
    <property type="entry name" value="Ribosomal_zn-bd"/>
</dbReference>
<dbReference type="NCBIfam" id="NF001764">
    <property type="entry name" value="PRK00504.1"/>
    <property type="match status" value="1"/>
</dbReference>
<dbReference type="NCBIfam" id="TIGR01023">
    <property type="entry name" value="rpmG_bact"/>
    <property type="match status" value="1"/>
</dbReference>
<dbReference type="Pfam" id="PF00471">
    <property type="entry name" value="Ribosomal_L33"/>
    <property type="match status" value="1"/>
</dbReference>
<dbReference type="SUPFAM" id="SSF57829">
    <property type="entry name" value="Zn-binding ribosomal proteins"/>
    <property type="match status" value="1"/>
</dbReference>
<evidence type="ECO:0000255" key="1">
    <source>
        <dbReference type="HAMAP-Rule" id="MF_00294"/>
    </source>
</evidence>
<evidence type="ECO:0000305" key="2"/>
<proteinExistence type="inferred from homology"/>